<feature type="chain" id="PRO_0000156680" description="Putative esterase DR_2321">
    <location>
        <begin position="1"/>
        <end position="146"/>
    </location>
</feature>
<keyword id="KW-0378">Hydrolase</keyword>
<keyword id="KW-1185">Reference proteome</keyword>
<protein>
    <recommendedName>
        <fullName>Putative esterase DR_2321</fullName>
        <ecNumber>3.1.2.-</ecNumber>
    </recommendedName>
</protein>
<sequence>MPIALAGGGFFRVSAPPARTPYPEAMSYAEVLGMTILDASPDLTRVALTVTEAGLNMHGTAHGGLIFSLADEAFAVISNLDAQAVAAETHMSFFRAAREGERLVAVATPERVGRTLATYRIEVRRGEEGEVLALFLGTVSRREKQS</sequence>
<organism>
    <name type="scientific">Deinococcus radiodurans (strain ATCC 13939 / DSM 20539 / JCM 16871 / CCUG 27074 / LMG 4051 / NBRC 15346 / NCIMB 9279 / VKM B-1422 / R1)</name>
    <dbReference type="NCBI Taxonomy" id="243230"/>
    <lineage>
        <taxon>Bacteria</taxon>
        <taxon>Thermotogati</taxon>
        <taxon>Deinococcota</taxon>
        <taxon>Deinococci</taxon>
        <taxon>Deinococcales</taxon>
        <taxon>Deinococcaceae</taxon>
        <taxon>Deinococcus</taxon>
    </lineage>
</organism>
<gene>
    <name type="ordered locus">DR_2321</name>
</gene>
<evidence type="ECO:0000305" key="1"/>
<name>Y2321_DEIRA</name>
<accession>Q9RS06</accession>
<reference key="1">
    <citation type="journal article" date="1999" name="Science">
        <title>Genome sequence of the radioresistant bacterium Deinococcus radiodurans R1.</title>
        <authorList>
            <person name="White O."/>
            <person name="Eisen J.A."/>
            <person name="Heidelberg J.F."/>
            <person name="Hickey E.K."/>
            <person name="Peterson J.D."/>
            <person name="Dodson R.J."/>
            <person name="Haft D.H."/>
            <person name="Gwinn M.L."/>
            <person name="Nelson W.C."/>
            <person name="Richardson D.L."/>
            <person name="Moffat K.S."/>
            <person name="Qin H."/>
            <person name="Jiang L."/>
            <person name="Pamphile W."/>
            <person name="Crosby M."/>
            <person name="Shen M."/>
            <person name="Vamathevan J.J."/>
            <person name="Lam P."/>
            <person name="McDonald L.A."/>
            <person name="Utterback T.R."/>
            <person name="Zalewski C."/>
            <person name="Makarova K.S."/>
            <person name="Aravind L."/>
            <person name="Daly M.J."/>
            <person name="Minton K.W."/>
            <person name="Fleischmann R.D."/>
            <person name="Ketchum K.A."/>
            <person name="Nelson K.E."/>
            <person name="Salzberg S.L."/>
            <person name="Smith H.O."/>
            <person name="Venter J.C."/>
            <person name="Fraser C.M."/>
        </authorList>
    </citation>
    <scope>NUCLEOTIDE SEQUENCE [LARGE SCALE GENOMIC DNA]</scope>
    <source>
        <strain>ATCC 13939 / DSM 20539 / JCM 16871 / CCUG 27074 / LMG 4051 / NBRC 15346 / NCIMB 9279 / VKM B-1422 / R1</strain>
    </source>
</reference>
<proteinExistence type="inferred from homology"/>
<comment type="similarity">
    <text evidence="1">Belongs to the thioesterase PaaI family.</text>
</comment>
<dbReference type="EC" id="3.1.2.-"/>
<dbReference type="EMBL" id="AE000513">
    <property type="protein sequence ID" value="AAF11862.1"/>
    <property type="molecule type" value="Genomic_DNA"/>
</dbReference>
<dbReference type="PIR" id="E75289">
    <property type="entry name" value="E75289"/>
</dbReference>
<dbReference type="RefSeq" id="NP_296042.1">
    <property type="nucleotide sequence ID" value="NC_001263.1"/>
</dbReference>
<dbReference type="SMR" id="Q9RS06"/>
<dbReference type="STRING" id="243230.DR_2321"/>
<dbReference type="PaxDb" id="243230-DR_2321"/>
<dbReference type="EnsemblBacteria" id="AAF11862">
    <property type="protein sequence ID" value="AAF11862"/>
    <property type="gene ID" value="DR_2321"/>
</dbReference>
<dbReference type="KEGG" id="dra:DR_2321"/>
<dbReference type="PATRIC" id="fig|243230.17.peg.2550"/>
<dbReference type="eggNOG" id="COG2050">
    <property type="taxonomic scope" value="Bacteria"/>
</dbReference>
<dbReference type="HOGENOM" id="CLU_089876_11_0_0"/>
<dbReference type="InParanoid" id="Q9RS06"/>
<dbReference type="OrthoDB" id="286702at2"/>
<dbReference type="Proteomes" id="UP000002524">
    <property type="component" value="Chromosome 1"/>
</dbReference>
<dbReference type="GO" id="GO:0016289">
    <property type="term" value="F:acyl-CoA hydrolase activity"/>
    <property type="evidence" value="ECO:0000318"/>
    <property type="project" value="GO_Central"/>
</dbReference>
<dbReference type="CDD" id="cd03443">
    <property type="entry name" value="PaaI_thioesterase"/>
    <property type="match status" value="1"/>
</dbReference>
<dbReference type="FunFam" id="3.10.129.10:FF:000022">
    <property type="entry name" value="Phenylacetic acid degradation protein"/>
    <property type="match status" value="1"/>
</dbReference>
<dbReference type="Gene3D" id="3.10.129.10">
    <property type="entry name" value="Hotdog Thioesterase"/>
    <property type="match status" value="1"/>
</dbReference>
<dbReference type="InterPro" id="IPR052723">
    <property type="entry name" value="Acyl-CoA_thioesterase_PaaI"/>
</dbReference>
<dbReference type="InterPro" id="IPR029069">
    <property type="entry name" value="HotDog_dom_sf"/>
</dbReference>
<dbReference type="InterPro" id="IPR011973">
    <property type="entry name" value="PaaD"/>
</dbReference>
<dbReference type="InterPro" id="IPR003736">
    <property type="entry name" value="PAAI_dom"/>
</dbReference>
<dbReference type="InterPro" id="IPR006683">
    <property type="entry name" value="Thioestr_dom"/>
</dbReference>
<dbReference type="NCBIfam" id="TIGR02286">
    <property type="entry name" value="PaaD"/>
    <property type="match status" value="1"/>
</dbReference>
<dbReference type="NCBIfam" id="TIGR00369">
    <property type="entry name" value="unchar_dom_1"/>
    <property type="match status" value="1"/>
</dbReference>
<dbReference type="PANTHER" id="PTHR42856">
    <property type="entry name" value="ACYL-COENZYME A THIOESTERASE PAAI"/>
    <property type="match status" value="1"/>
</dbReference>
<dbReference type="PANTHER" id="PTHR42856:SF1">
    <property type="entry name" value="ACYL-COENZYME A THIOESTERASE PAAI"/>
    <property type="match status" value="1"/>
</dbReference>
<dbReference type="Pfam" id="PF03061">
    <property type="entry name" value="4HBT"/>
    <property type="match status" value="1"/>
</dbReference>
<dbReference type="SUPFAM" id="SSF54637">
    <property type="entry name" value="Thioesterase/thiol ester dehydrase-isomerase"/>
    <property type="match status" value="1"/>
</dbReference>